<feature type="chain" id="PRO_0000186965" description="Uncharacterized protein aq_2036">
    <location>
        <begin position="1"/>
        <end position="216"/>
    </location>
</feature>
<feature type="transmembrane region" description="Helical" evidence="1">
    <location>
        <begin position="5"/>
        <end position="27"/>
    </location>
</feature>
<feature type="transmembrane region" description="Helical" evidence="1">
    <location>
        <begin position="98"/>
        <end position="120"/>
    </location>
</feature>
<feature type="transmembrane region" description="Helical" evidence="1">
    <location>
        <begin position="125"/>
        <end position="147"/>
    </location>
</feature>
<feature type="transmembrane region" description="Helical" evidence="1">
    <location>
        <begin position="185"/>
        <end position="207"/>
    </location>
</feature>
<comment type="subcellular location">
    <subcellularLocation>
        <location evidence="2">Cell membrane</location>
        <topology evidence="2">Multi-pass membrane protein</topology>
    </subcellularLocation>
</comment>
<protein>
    <recommendedName>
        <fullName>Uncharacterized protein aq_2036</fullName>
    </recommendedName>
</protein>
<organism>
    <name type="scientific">Aquifex aeolicus (strain VF5)</name>
    <dbReference type="NCBI Taxonomy" id="224324"/>
    <lineage>
        <taxon>Bacteria</taxon>
        <taxon>Pseudomonadati</taxon>
        <taxon>Aquificota</taxon>
        <taxon>Aquificia</taxon>
        <taxon>Aquificales</taxon>
        <taxon>Aquificaceae</taxon>
        <taxon>Aquifex</taxon>
    </lineage>
</organism>
<proteinExistence type="predicted"/>
<gene>
    <name type="ordered locus">aq_2036</name>
</gene>
<accession>O67827</accession>
<evidence type="ECO:0000255" key="1"/>
<evidence type="ECO:0000305" key="2"/>
<reference key="1">
    <citation type="journal article" date="1998" name="Nature">
        <title>The complete genome of the hyperthermophilic bacterium Aquifex aeolicus.</title>
        <authorList>
            <person name="Deckert G."/>
            <person name="Warren P.V."/>
            <person name="Gaasterland T."/>
            <person name="Young W.G."/>
            <person name="Lenox A.L."/>
            <person name="Graham D.E."/>
            <person name="Overbeek R."/>
            <person name="Snead M.A."/>
            <person name="Keller M."/>
            <person name="Aujay M."/>
            <person name="Huber R."/>
            <person name="Feldman R.A."/>
            <person name="Short J.M."/>
            <person name="Olsen G.J."/>
            <person name="Swanson R.V."/>
        </authorList>
    </citation>
    <scope>NUCLEOTIDE SEQUENCE [LARGE SCALE GENOMIC DNA]</scope>
    <source>
        <strain>VF5</strain>
    </source>
</reference>
<dbReference type="EMBL" id="AE000657">
    <property type="protein sequence ID" value="AAC07797.1"/>
    <property type="molecule type" value="Genomic_DNA"/>
</dbReference>
<dbReference type="PIR" id="G70474">
    <property type="entry name" value="G70474"/>
</dbReference>
<dbReference type="RefSeq" id="NP_214396.1">
    <property type="nucleotide sequence ID" value="NC_000918.1"/>
</dbReference>
<dbReference type="RefSeq" id="WP_010881332.1">
    <property type="nucleotide sequence ID" value="NC_000918.1"/>
</dbReference>
<dbReference type="SMR" id="O67827"/>
<dbReference type="STRING" id="224324.aq_2036"/>
<dbReference type="EnsemblBacteria" id="AAC07797">
    <property type="protein sequence ID" value="AAC07797"/>
    <property type="gene ID" value="aq_2036"/>
</dbReference>
<dbReference type="KEGG" id="aae:aq_2036"/>
<dbReference type="eggNOG" id="COG4478">
    <property type="taxonomic scope" value="Bacteria"/>
</dbReference>
<dbReference type="HOGENOM" id="CLU_1314005_0_0_0"/>
<dbReference type="InParanoid" id="O67827"/>
<dbReference type="OrthoDB" id="4804608at2"/>
<dbReference type="Proteomes" id="UP000000798">
    <property type="component" value="Chromosome"/>
</dbReference>
<dbReference type="GO" id="GO:0005886">
    <property type="term" value="C:plasma membrane"/>
    <property type="evidence" value="ECO:0007669"/>
    <property type="project" value="UniProtKB-SubCell"/>
</dbReference>
<dbReference type="InterPro" id="IPR010178">
    <property type="entry name" value="Lit"/>
</dbReference>
<dbReference type="NCBIfam" id="TIGR01906">
    <property type="entry name" value="integ_TIGR01906"/>
    <property type="match status" value="1"/>
</dbReference>
<dbReference type="Pfam" id="PF07314">
    <property type="entry name" value="Lit"/>
    <property type="match status" value="1"/>
</dbReference>
<keyword id="KW-1003">Cell membrane</keyword>
<keyword id="KW-0472">Membrane</keyword>
<keyword id="KW-1185">Reference proteome</keyword>
<keyword id="KW-0812">Transmembrane</keyword>
<keyword id="KW-1133">Transmembrane helix</keyword>
<sequence>MRKLISLILVIIFPYISLGLSARIAFSEKFIEWEYSRKNFPEDRWGMEKEERLKLAKLGLKAVISDKGMEEFKKARLKNGKRAFTDREVKHMEDVKRFLSFFFPSVYVLSIIWIAGVFLLRSFDVLIWSGIFNSLLLLFLGILTFTNYEKAFELFHNVVFDPYSWKFRYSDTLIRIYPMKFWYDGTLFVAILSFLFGILVLFTGILGKKFLKGKGA</sequence>
<name>Y2036_AQUAE</name>